<sequence length="15" mass="1625">AVQLLEVNPEIAQNS</sequence>
<name>STX9_SCOVN</name>
<evidence type="ECO:0000269" key="1">
    <source>
    </source>
</evidence>
<evidence type="ECO:0000305" key="2"/>
<evidence type="ECO:0000305" key="3">
    <source>
    </source>
</evidence>
<organism>
    <name type="scientific">Scolopendra viridicornis nigra</name>
    <name type="common">Brazilian giant centipede</name>
    <dbReference type="NCBI Taxonomy" id="486497"/>
    <lineage>
        <taxon>Eukaryota</taxon>
        <taxon>Metazoa</taxon>
        <taxon>Ecdysozoa</taxon>
        <taxon>Arthropoda</taxon>
        <taxon>Myriapoda</taxon>
        <taxon>Chilopoda</taxon>
        <taxon>Pleurostigmophora</taxon>
        <taxon>Scolopendromorpha</taxon>
        <taxon>Scolopendridae</taxon>
        <taxon>Scolopendra</taxon>
    </lineage>
</organism>
<protein>
    <recommendedName>
        <fullName>Scolopendra 10564.33 Da toxin</fullName>
    </recommendedName>
</protein>
<accession>P0C8D3</accession>
<proteinExistence type="evidence at protein level"/>
<comment type="subcellular location">
    <subcellularLocation>
        <location evidence="1">Secreted</location>
    </subcellularLocation>
</comment>
<comment type="tissue specificity">
    <text evidence="3">Expressed by the venom gland.</text>
</comment>
<comment type="mass spectrometry" mass="10564.33" method="Electrospray" evidence="1"/>
<comment type="similarity">
    <text evidence="2">Belongs to the scolopendra toxin 9 family.</text>
</comment>
<keyword id="KW-0903">Direct protein sequencing</keyword>
<keyword id="KW-0528">Neurotoxin</keyword>
<keyword id="KW-0964">Secreted</keyword>
<keyword id="KW-0800">Toxin</keyword>
<dbReference type="GO" id="GO:0005576">
    <property type="term" value="C:extracellular region"/>
    <property type="evidence" value="ECO:0007669"/>
    <property type="project" value="UniProtKB-SubCell"/>
</dbReference>
<dbReference type="GO" id="GO:0090729">
    <property type="term" value="F:toxin activity"/>
    <property type="evidence" value="ECO:0007669"/>
    <property type="project" value="UniProtKB-KW"/>
</dbReference>
<reference key="1">
    <citation type="journal article" date="2007" name="Toxicon">
        <title>Venomic analyses of Scolopendra viridicornis nigra and Scolopendra angulata (Centipede, Scolopendromorpha): shedding light on venoms from a neglected group.</title>
        <authorList>
            <person name="Rates B."/>
            <person name="Bemquerer M.P."/>
            <person name="Richardson M."/>
            <person name="Borges M.H."/>
            <person name="Morales R.A.V."/>
            <person name="De Lima M.E."/>
            <person name="Pimenta A.M.C."/>
        </authorList>
    </citation>
    <scope>PROTEIN SEQUENCE</scope>
    <scope>MASS SPECTROMETRY</scope>
    <scope>SUBCELLULAR LOCATION</scope>
    <source>
        <tissue>Venom</tissue>
    </source>
</reference>
<feature type="chain" id="PRO_0000352869" description="Scolopendra 10564.33 Da toxin">
    <location>
        <begin position="1"/>
        <end position="15" status="greater than"/>
    </location>
</feature>
<feature type="non-terminal residue">
    <location>
        <position position="15"/>
    </location>
</feature>